<evidence type="ECO:0000255" key="1">
    <source>
        <dbReference type="HAMAP-Rule" id="MF_00175"/>
    </source>
</evidence>
<evidence type="ECO:0000255" key="2">
    <source>
        <dbReference type="PROSITE-ProRule" id="PRU01250"/>
    </source>
</evidence>
<accession>B4RCN8</accession>
<dbReference type="EMBL" id="CP000747">
    <property type="protein sequence ID" value="ACG78225.1"/>
    <property type="molecule type" value="Genomic_DNA"/>
</dbReference>
<dbReference type="RefSeq" id="WP_012522367.1">
    <property type="nucleotide sequence ID" value="NC_011144.1"/>
</dbReference>
<dbReference type="SMR" id="B4RCN8"/>
<dbReference type="STRING" id="450851.PHZ_c1814"/>
<dbReference type="KEGG" id="pzu:PHZ_c1814"/>
<dbReference type="eggNOG" id="COG1219">
    <property type="taxonomic scope" value="Bacteria"/>
</dbReference>
<dbReference type="HOGENOM" id="CLU_014218_8_2_5"/>
<dbReference type="OrthoDB" id="9804062at2"/>
<dbReference type="Proteomes" id="UP000001868">
    <property type="component" value="Chromosome"/>
</dbReference>
<dbReference type="GO" id="GO:0009376">
    <property type="term" value="C:HslUV protease complex"/>
    <property type="evidence" value="ECO:0007669"/>
    <property type="project" value="TreeGrafter"/>
</dbReference>
<dbReference type="GO" id="GO:0005524">
    <property type="term" value="F:ATP binding"/>
    <property type="evidence" value="ECO:0007669"/>
    <property type="project" value="UniProtKB-UniRule"/>
</dbReference>
<dbReference type="GO" id="GO:0016887">
    <property type="term" value="F:ATP hydrolysis activity"/>
    <property type="evidence" value="ECO:0007669"/>
    <property type="project" value="InterPro"/>
</dbReference>
<dbReference type="GO" id="GO:0140662">
    <property type="term" value="F:ATP-dependent protein folding chaperone"/>
    <property type="evidence" value="ECO:0007669"/>
    <property type="project" value="InterPro"/>
</dbReference>
<dbReference type="GO" id="GO:0046983">
    <property type="term" value="F:protein dimerization activity"/>
    <property type="evidence" value="ECO:0007669"/>
    <property type="project" value="InterPro"/>
</dbReference>
<dbReference type="GO" id="GO:0051082">
    <property type="term" value="F:unfolded protein binding"/>
    <property type="evidence" value="ECO:0007669"/>
    <property type="project" value="UniProtKB-UniRule"/>
</dbReference>
<dbReference type="GO" id="GO:0008270">
    <property type="term" value="F:zinc ion binding"/>
    <property type="evidence" value="ECO:0007669"/>
    <property type="project" value="InterPro"/>
</dbReference>
<dbReference type="GO" id="GO:0051301">
    <property type="term" value="P:cell division"/>
    <property type="evidence" value="ECO:0007669"/>
    <property type="project" value="TreeGrafter"/>
</dbReference>
<dbReference type="GO" id="GO:0051603">
    <property type="term" value="P:proteolysis involved in protein catabolic process"/>
    <property type="evidence" value="ECO:0007669"/>
    <property type="project" value="TreeGrafter"/>
</dbReference>
<dbReference type="CDD" id="cd19497">
    <property type="entry name" value="RecA-like_ClpX"/>
    <property type="match status" value="1"/>
</dbReference>
<dbReference type="FunFam" id="1.10.8.60:FF:000002">
    <property type="entry name" value="ATP-dependent Clp protease ATP-binding subunit ClpX"/>
    <property type="match status" value="1"/>
</dbReference>
<dbReference type="FunFam" id="3.40.50.300:FF:000005">
    <property type="entry name" value="ATP-dependent Clp protease ATP-binding subunit ClpX"/>
    <property type="match status" value="1"/>
</dbReference>
<dbReference type="Gene3D" id="1.10.8.60">
    <property type="match status" value="1"/>
</dbReference>
<dbReference type="Gene3D" id="6.20.220.10">
    <property type="entry name" value="ClpX chaperone, C4-type zinc finger domain"/>
    <property type="match status" value="1"/>
</dbReference>
<dbReference type="Gene3D" id="3.40.50.300">
    <property type="entry name" value="P-loop containing nucleotide triphosphate hydrolases"/>
    <property type="match status" value="1"/>
</dbReference>
<dbReference type="HAMAP" id="MF_00175">
    <property type="entry name" value="ClpX"/>
    <property type="match status" value="1"/>
</dbReference>
<dbReference type="InterPro" id="IPR003593">
    <property type="entry name" value="AAA+_ATPase"/>
</dbReference>
<dbReference type="InterPro" id="IPR050052">
    <property type="entry name" value="ATP-dep_Clp_protease_ClpX"/>
</dbReference>
<dbReference type="InterPro" id="IPR003959">
    <property type="entry name" value="ATPase_AAA_core"/>
</dbReference>
<dbReference type="InterPro" id="IPR019489">
    <property type="entry name" value="Clp_ATPase_C"/>
</dbReference>
<dbReference type="InterPro" id="IPR004487">
    <property type="entry name" value="Clp_protease_ATP-bd_su_ClpX"/>
</dbReference>
<dbReference type="InterPro" id="IPR046425">
    <property type="entry name" value="ClpX_bact"/>
</dbReference>
<dbReference type="InterPro" id="IPR027417">
    <property type="entry name" value="P-loop_NTPase"/>
</dbReference>
<dbReference type="InterPro" id="IPR010603">
    <property type="entry name" value="Znf_CppX_C4"/>
</dbReference>
<dbReference type="InterPro" id="IPR038366">
    <property type="entry name" value="Znf_CppX_C4_sf"/>
</dbReference>
<dbReference type="NCBIfam" id="TIGR00382">
    <property type="entry name" value="clpX"/>
    <property type="match status" value="1"/>
</dbReference>
<dbReference type="NCBIfam" id="NF003745">
    <property type="entry name" value="PRK05342.1"/>
    <property type="match status" value="1"/>
</dbReference>
<dbReference type="PANTHER" id="PTHR48102:SF7">
    <property type="entry name" value="ATP-DEPENDENT CLP PROTEASE ATP-BINDING SUBUNIT CLPX-LIKE, MITOCHONDRIAL"/>
    <property type="match status" value="1"/>
</dbReference>
<dbReference type="PANTHER" id="PTHR48102">
    <property type="entry name" value="ATP-DEPENDENT CLP PROTEASE ATP-BINDING SUBUNIT CLPX-LIKE, MITOCHONDRIAL-RELATED"/>
    <property type="match status" value="1"/>
</dbReference>
<dbReference type="Pfam" id="PF07724">
    <property type="entry name" value="AAA_2"/>
    <property type="match status" value="1"/>
</dbReference>
<dbReference type="Pfam" id="PF10431">
    <property type="entry name" value="ClpB_D2-small"/>
    <property type="match status" value="1"/>
</dbReference>
<dbReference type="Pfam" id="PF06689">
    <property type="entry name" value="zf-C4_ClpX"/>
    <property type="match status" value="1"/>
</dbReference>
<dbReference type="SMART" id="SM00382">
    <property type="entry name" value="AAA"/>
    <property type="match status" value="1"/>
</dbReference>
<dbReference type="SMART" id="SM01086">
    <property type="entry name" value="ClpB_D2-small"/>
    <property type="match status" value="1"/>
</dbReference>
<dbReference type="SMART" id="SM00994">
    <property type="entry name" value="zf-C4_ClpX"/>
    <property type="match status" value="1"/>
</dbReference>
<dbReference type="SUPFAM" id="SSF57716">
    <property type="entry name" value="Glucocorticoid receptor-like (DNA-binding domain)"/>
    <property type="match status" value="1"/>
</dbReference>
<dbReference type="SUPFAM" id="SSF52540">
    <property type="entry name" value="P-loop containing nucleoside triphosphate hydrolases"/>
    <property type="match status" value="1"/>
</dbReference>
<dbReference type="PROSITE" id="PS51902">
    <property type="entry name" value="CLPX_ZB"/>
    <property type="match status" value="1"/>
</dbReference>
<reference key="1">
    <citation type="journal article" date="2008" name="BMC Genomics">
        <title>Complete genome of Phenylobacterium zucineum - a novel facultative intracellular bacterium isolated from human erythroleukemia cell line K562.</title>
        <authorList>
            <person name="Luo Y."/>
            <person name="Xu X."/>
            <person name="Ding Z."/>
            <person name="Liu Z."/>
            <person name="Zhang B."/>
            <person name="Yan Z."/>
            <person name="Sun J."/>
            <person name="Hu S."/>
            <person name="Hu X."/>
        </authorList>
    </citation>
    <scope>NUCLEOTIDE SEQUENCE [LARGE SCALE GENOMIC DNA]</scope>
    <source>
        <strain>HLK1</strain>
    </source>
</reference>
<gene>
    <name evidence="1" type="primary">clpX</name>
    <name type="ordered locus">PHZ_c1814</name>
</gene>
<feature type="chain" id="PRO_1000097980" description="ATP-dependent Clp protease ATP-binding subunit ClpX">
    <location>
        <begin position="1"/>
        <end position="420"/>
    </location>
</feature>
<feature type="domain" description="ClpX-type ZB" evidence="2">
    <location>
        <begin position="3"/>
        <end position="56"/>
    </location>
</feature>
<feature type="binding site" evidence="2">
    <location>
        <position position="15"/>
    </location>
    <ligand>
        <name>Zn(2+)</name>
        <dbReference type="ChEBI" id="CHEBI:29105"/>
    </ligand>
</feature>
<feature type="binding site" evidence="2">
    <location>
        <position position="18"/>
    </location>
    <ligand>
        <name>Zn(2+)</name>
        <dbReference type="ChEBI" id="CHEBI:29105"/>
    </ligand>
</feature>
<feature type="binding site" evidence="2">
    <location>
        <position position="37"/>
    </location>
    <ligand>
        <name>Zn(2+)</name>
        <dbReference type="ChEBI" id="CHEBI:29105"/>
    </ligand>
</feature>
<feature type="binding site" evidence="2">
    <location>
        <position position="40"/>
    </location>
    <ligand>
        <name>Zn(2+)</name>
        <dbReference type="ChEBI" id="CHEBI:29105"/>
    </ligand>
</feature>
<feature type="binding site" evidence="1">
    <location>
        <begin position="119"/>
        <end position="126"/>
    </location>
    <ligand>
        <name>ATP</name>
        <dbReference type="ChEBI" id="CHEBI:30616"/>
    </ligand>
</feature>
<comment type="function">
    <text evidence="1">ATP-dependent specificity component of the Clp protease. It directs the protease to specific substrates. Can perform chaperone functions in the absence of ClpP.</text>
</comment>
<comment type="subunit">
    <text evidence="1">Component of the ClpX-ClpP complex. Forms a hexameric ring that, in the presence of ATP, binds to fourteen ClpP subunits assembled into a disk-like structure with a central cavity, resembling the structure of eukaryotic proteasomes.</text>
</comment>
<comment type="similarity">
    <text evidence="1">Belongs to the ClpX chaperone family.</text>
</comment>
<organism>
    <name type="scientific">Phenylobacterium zucineum (strain HLK1)</name>
    <dbReference type="NCBI Taxonomy" id="450851"/>
    <lineage>
        <taxon>Bacteria</taxon>
        <taxon>Pseudomonadati</taxon>
        <taxon>Pseudomonadota</taxon>
        <taxon>Alphaproteobacteria</taxon>
        <taxon>Caulobacterales</taxon>
        <taxon>Caulobacteraceae</taxon>
        <taxon>Phenylobacterium</taxon>
    </lineage>
</organism>
<sequence length="420" mass="46079">MTKAASGDSKSTLYCSFCGKSQHEVRKLIAGPTVFICDECVELCMDIIREEHKISFVKSKDGVPTPKEIREVLDDYVIGQDHAKKVLSVAVHNHYKRLNHATKNNDVELGKANILLIGPTGTGKTLLAQTLARIIDVPFTVADATTLTEAGYVGEDVENIILKLLQAADYNVERAQRGIVYIDEVDKISRKSDNPSITRDVSGEGVQQALLKIMEGTVASVPPQGGRKHPQQEFLQVDTTNILFICGGAFAGLEKIISARGQGTSIGFGAKVADPDERRTGEIFRQVEPDDLLRFGLIPEFIGRLPVIATLDDLDEKALVKILTEPKNAFVKQYVRLFEMENVGLTFTEDALMAVARKAIQRKTGARGLRSILEGVLLDTMYELPTYDGVEEVVVNAEVIEGRAQPLIIYAERRDKGGAA</sequence>
<proteinExistence type="inferred from homology"/>
<protein>
    <recommendedName>
        <fullName evidence="1">ATP-dependent Clp protease ATP-binding subunit ClpX</fullName>
    </recommendedName>
</protein>
<keyword id="KW-0067">ATP-binding</keyword>
<keyword id="KW-0143">Chaperone</keyword>
<keyword id="KW-0479">Metal-binding</keyword>
<keyword id="KW-0547">Nucleotide-binding</keyword>
<keyword id="KW-1185">Reference proteome</keyword>
<keyword id="KW-0862">Zinc</keyword>
<name>CLPX_PHEZH</name>